<reference key="1">
    <citation type="journal article" date="1997" name="Nature">
        <title>Genomic sequence of a Lyme disease spirochaete, Borrelia burgdorferi.</title>
        <authorList>
            <person name="Fraser C.M."/>
            <person name="Casjens S."/>
            <person name="Huang W.M."/>
            <person name="Sutton G.G."/>
            <person name="Clayton R.A."/>
            <person name="Lathigra R."/>
            <person name="White O."/>
            <person name="Ketchum K.A."/>
            <person name="Dodson R.J."/>
            <person name="Hickey E.K."/>
            <person name="Gwinn M.L."/>
            <person name="Dougherty B.A."/>
            <person name="Tomb J.-F."/>
            <person name="Fleischmann R.D."/>
            <person name="Richardson D.L."/>
            <person name="Peterson J.D."/>
            <person name="Kerlavage A.R."/>
            <person name="Quackenbush J."/>
            <person name="Salzberg S.L."/>
            <person name="Hanson M."/>
            <person name="van Vugt R."/>
            <person name="Palmer N."/>
            <person name="Adams M.D."/>
            <person name="Gocayne J.D."/>
            <person name="Weidman J.F."/>
            <person name="Utterback T.R."/>
            <person name="Watthey L."/>
            <person name="McDonald L.A."/>
            <person name="Artiach P."/>
            <person name="Bowman C."/>
            <person name="Garland S.A."/>
            <person name="Fujii C."/>
            <person name="Cotton M.D."/>
            <person name="Horst K."/>
            <person name="Roberts K.M."/>
            <person name="Hatch B."/>
            <person name="Smith H.O."/>
            <person name="Venter J.C."/>
        </authorList>
    </citation>
    <scope>NUCLEOTIDE SEQUENCE [LARGE SCALE GENOMIC DNA]</scope>
    <source>
        <strain>ATCC 35210 / DSM 4680 / CIP 102532 / B31</strain>
    </source>
</reference>
<reference key="2">
    <citation type="journal article" date="2011" name="PLoS ONE">
        <title>HrpA, a DEAH-box RNA helicase, is involved in global gene regulation in the Lyme disease spirochete.</title>
        <authorList>
            <person name="Salman-Dilgimen A."/>
            <person name="Hardy P.O."/>
            <person name="Dresser A.R."/>
            <person name="Chaconas G."/>
        </authorList>
    </citation>
    <scope>FUNCTION</scope>
    <scope>DISRUPTION PHENOTYPE</scope>
    <source>
        <strain>ATCC 35210 / DSM 4680 / CIP 102532 / B31</strain>
    </source>
</reference>
<reference key="3">
    <citation type="journal article" date="2013" name="PLoS Pathog.">
        <title>HrpA, an RNA helicase involved in RNA processing, is required for mouse infectivity and tick transmission of the Lyme disease spirochete.</title>
        <authorList>
            <person name="Salman-Dilgimen A."/>
            <person name="Hardy P.O."/>
            <person name="Radolf J.D."/>
            <person name="Caimano M.J."/>
            <person name="Chaconas G."/>
        </authorList>
    </citation>
    <scope>FUNCTION</scope>
    <scope>CATALYTIC ACTIVITY</scope>
    <scope>MUTAGENESIS OF ASP-126; GLU-127; SER-158; THR-160 AND ILE-285</scope>
</reference>
<organism>
    <name type="scientific">Borreliella burgdorferi (strain ATCC 35210 / DSM 4680 / CIP 102532 / B31)</name>
    <name type="common">Borrelia burgdorferi</name>
    <dbReference type="NCBI Taxonomy" id="224326"/>
    <lineage>
        <taxon>Bacteria</taxon>
        <taxon>Pseudomonadati</taxon>
        <taxon>Spirochaetota</taxon>
        <taxon>Spirochaetia</taxon>
        <taxon>Spirochaetales</taxon>
        <taxon>Borreliaceae</taxon>
        <taxon>Borreliella</taxon>
    </lineage>
</organism>
<proteinExistence type="evidence at protein level"/>
<keyword id="KW-0067">ATP-binding</keyword>
<keyword id="KW-0347">Helicase</keyword>
<keyword id="KW-0378">Hydrolase</keyword>
<keyword id="KW-0547">Nucleotide-binding</keyword>
<keyword id="KW-1185">Reference proteome</keyword>
<keyword id="KW-0843">Virulence</keyword>
<gene>
    <name evidence="5" type="primary">hrpA</name>
    <name evidence="7" type="ordered locus">BB_0827</name>
</gene>
<feature type="chain" id="PRO_0000443809" description="ATP-dependent RNA helicase HrpA">
    <location>
        <begin position="1"/>
        <end position="823"/>
    </location>
</feature>
<feature type="domain" description="Helicase ATP-binding" evidence="1">
    <location>
        <begin position="16"/>
        <end position="179"/>
    </location>
</feature>
<feature type="domain" description="Helicase C-terminal" evidence="2">
    <location>
        <begin position="203"/>
        <end position="374"/>
    </location>
</feature>
<feature type="short sequence motif" description="DEAH box" evidence="1">
    <location>
        <begin position="126"/>
        <end position="129"/>
    </location>
</feature>
<feature type="binding site" evidence="1">
    <location>
        <begin position="29"/>
        <end position="36"/>
    </location>
    <ligand>
        <name>ATP</name>
        <dbReference type="ChEBI" id="CHEBI:30616"/>
    </ligand>
</feature>
<feature type="mutagenesis site" description="Almost loss of ATPase activity and helicase activity. Loss of infectivity in mice." evidence="4">
    <original>D</original>
    <variation>A</variation>
    <location>
        <position position="126"/>
    </location>
</feature>
<feature type="mutagenesis site" description="Almost loss of ATPase activity and helicase activity. Loss of infectivity in mice." evidence="4">
    <original>E</original>
    <variation>A</variation>
    <location>
        <position position="127"/>
    </location>
</feature>
<feature type="mutagenesis site" description="Strong decrease of ATPase activity in the presence of poly(A). Strong decrease of helicase activity. Slight delay in the infection in mice." evidence="4">
    <original>S</original>
    <variation>A</variation>
    <location>
        <position position="158"/>
    </location>
</feature>
<feature type="mutagenesis site" description="Strong decrease of ATPase activity in the presence of poly(A). Strong decrease of helicase activity." evidence="4">
    <original>T</original>
    <variation>A</variation>
    <location>
        <position position="160"/>
    </location>
</feature>
<feature type="mutagenesis site" description="4-fold decrease of ATPase activity in the presence of poly(A). ATPase activity is not affected in the absence of poly(A). Almost loss of helicase activity. Decrease of infectivity in mice." evidence="4">
    <original>I</original>
    <variation>A</variation>
    <location>
        <position position="285"/>
    </location>
</feature>
<name>HRPA_BORBU</name>
<evidence type="ECO:0000255" key="1">
    <source>
        <dbReference type="PROSITE-ProRule" id="PRU00541"/>
    </source>
</evidence>
<evidence type="ECO:0000255" key="2">
    <source>
        <dbReference type="PROSITE-ProRule" id="PRU00542"/>
    </source>
</evidence>
<evidence type="ECO:0000269" key="3">
    <source>
    </source>
</evidence>
<evidence type="ECO:0000269" key="4">
    <source>
    </source>
</evidence>
<evidence type="ECO:0000303" key="5">
    <source>
    </source>
</evidence>
<evidence type="ECO:0000305" key="6"/>
<evidence type="ECO:0000312" key="7">
    <source>
        <dbReference type="EMBL" id="AAC67162.1"/>
    </source>
</evidence>
<accession>O51767</accession>
<protein>
    <recommendedName>
        <fullName evidence="6">ATP-dependent RNA helicase HrpA</fullName>
        <ecNumber evidence="4">3.6.4.13</ecNumber>
    </recommendedName>
</protein>
<sequence length="823" mass="95088">MNDFKLPIYKYKDELIKVLKNHNVLIVESPTGSGKTTQLPRIIYEAGFAKLGKIGVTQPRRIATVSIAEYIAKHIGVNVGEEVGYKIRFEEITSPKTKIKLMTDGVLLQELKKDTLLYEYDVIIIDEAHERSLNIDFILGLIKDISRKRDDFKIIVSSATINTKIFSKYFNNAPVVSIETITYPVQIIYNPPLLNTSKGMILKIKEIVLNVIKEKKAGDILIFLSGEKEIKETIKELQELNSKKNLIIFPLYGRMPKEAQEQIFMTTPKNKRKIIVSTNIAETSITIENIKIVIDSGKVKTNKFQTKTHTYSLQEVPISKSSATQRAGRAGRLSKGTCYRLYKREDYQLREDYQKEEIYRTDLSEVVLRMADIGIRDFTHFDFISKPSTHSIQTASKILKSLDAINNKNELTEIGKYMILFPLIPAHSRALVEAMINYPQAIYQTTIGLSFLSTSGIFLLPQNEEMEARQAHLKYKNPMGDLIGFVNIFEDFKKALNKEAFTKENYLDLQGLEEIANVQMQLENIISKLNIPIIQKGVFDNEGYLKSIMRGMRDYICFKTSKKKYKTIKAQNVIIHPGSLISTDSVKYFVAGEIIETTKMYARSIGVLKKEWIDDIILNEEFKHNDISSKENQITNTGQTKIINEIKIGKKIFKAEYKNNIYVIKINLETLKEIIFKNELNNQNNEDLKKIKIQLMHKNITVFNNKKFLETIEIVKNMGKDWHCIKKYETKNVNIDEPEKMKNLLECTMQFISFPPKKNALFLSLETDYSGNFRLKPKQNFIMAIEESIESIKSLIENKEYIQKLHFIKKLINKVYKKLNYFF</sequence>
<comment type="function">
    <text evidence="3 4">Has RNA-stimulated ATPase activity and RNA helicase activity (PubMed:24367266). Involved in global regulation of gene expression (PubMed:21814569). Could be involved in RNA processing and post-transcriptional gene regulation (PubMed:24367266). Essential for both tick transmission and mouse infection (PubMed:24367266).</text>
</comment>
<comment type="catalytic activity">
    <reaction evidence="4">
        <text>ATP + H2O = ADP + phosphate + H(+)</text>
        <dbReference type="Rhea" id="RHEA:13065"/>
        <dbReference type="ChEBI" id="CHEBI:15377"/>
        <dbReference type="ChEBI" id="CHEBI:15378"/>
        <dbReference type="ChEBI" id="CHEBI:30616"/>
        <dbReference type="ChEBI" id="CHEBI:43474"/>
        <dbReference type="ChEBI" id="CHEBI:456216"/>
        <dbReference type="EC" id="3.6.4.13"/>
    </reaction>
</comment>
<comment type="disruption phenotype">
    <text evidence="3">Disruption of the gene results in the modulation of the expression of about 180 proteins and in a complete loss in the ability of the spirochetes to infect mice by needle inoculation.</text>
</comment>
<comment type="similarity">
    <text evidence="6">Belongs to the DEAD box helicase family. DEAH subfamily.</text>
</comment>
<dbReference type="EC" id="3.6.4.13" evidence="4"/>
<dbReference type="EMBL" id="AE000783">
    <property type="protein sequence ID" value="AAC67162.1"/>
    <property type="molecule type" value="Genomic_DNA"/>
</dbReference>
<dbReference type="PIR" id="B70203">
    <property type="entry name" value="B70203"/>
</dbReference>
<dbReference type="RefSeq" id="NP_212961.1">
    <property type="nucleotide sequence ID" value="NC_001318.1"/>
</dbReference>
<dbReference type="RefSeq" id="WP_002660733.1">
    <property type="nucleotide sequence ID" value="NC_001318.1"/>
</dbReference>
<dbReference type="SMR" id="O51767"/>
<dbReference type="STRING" id="224326.BB_0827"/>
<dbReference type="PaxDb" id="224326-BB_0827"/>
<dbReference type="EnsemblBacteria" id="AAC67162">
    <property type="protein sequence ID" value="AAC67162"/>
    <property type="gene ID" value="BB_0827"/>
</dbReference>
<dbReference type="KEGG" id="bbu:BB_0827"/>
<dbReference type="PATRIC" id="fig|224326.49.peg.1219"/>
<dbReference type="HOGENOM" id="CLU_001832_5_12_12"/>
<dbReference type="OrthoDB" id="9808833at2"/>
<dbReference type="Proteomes" id="UP000001807">
    <property type="component" value="Chromosome"/>
</dbReference>
<dbReference type="GO" id="GO:0005524">
    <property type="term" value="F:ATP binding"/>
    <property type="evidence" value="ECO:0007669"/>
    <property type="project" value="UniProtKB-KW"/>
</dbReference>
<dbReference type="GO" id="GO:0016887">
    <property type="term" value="F:ATP hydrolysis activity"/>
    <property type="evidence" value="ECO:0007669"/>
    <property type="project" value="RHEA"/>
</dbReference>
<dbReference type="GO" id="GO:0003723">
    <property type="term" value="F:RNA binding"/>
    <property type="evidence" value="ECO:0007669"/>
    <property type="project" value="TreeGrafter"/>
</dbReference>
<dbReference type="GO" id="GO:0003724">
    <property type="term" value="F:RNA helicase activity"/>
    <property type="evidence" value="ECO:0007669"/>
    <property type="project" value="UniProtKB-EC"/>
</dbReference>
<dbReference type="CDD" id="cd17917">
    <property type="entry name" value="DEXHc_RHA-like"/>
    <property type="match status" value="1"/>
</dbReference>
<dbReference type="CDD" id="cd18791">
    <property type="entry name" value="SF2_C_RHA"/>
    <property type="match status" value="1"/>
</dbReference>
<dbReference type="FunFam" id="3.40.50.300:FF:000578">
    <property type="entry name" value="probable ATP-dependent RNA helicase DHX35"/>
    <property type="match status" value="1"/>
</dbReference>
<dbReference type="Gene3D" id="1.20.120.1080">
    <property type="match status" value="1"/>
</dbReference>
<dbReference type="Gene3D" id="3.40.50.300">
    <property type="entry name" value="P-loop containing nucleotide triphosphate hydrolases"/>
    <property type="match status" value="2"/>
</dbReference>
<dbReference type="InterPro" id="IPR011709">
    <property type="entry name" value="DEAD-box_helicase_OB_fold"/>
</dbReference>
<dbReference type="InterPro" id="IPR011545">
    <property type="entry name" value="DEAD/DEAH_box_helicase_dom"/>
</dbReference>
<dbReference type="InterPro" id="IPR048333">
    <property type="entry name" value="HA2_WH"/>
</dbReference>
<dbReference type="InterPro" id="IPR007502">
    <property type="entry name" value="Helicase-assoc_dom"/>
</dbReference>
<dbReference type="InterPro" id="IPR014001">
    <property type="entry name" value="Helicase_ATP-bd"/>
</dbReference>
<dbReference type="InterPro" id="IPR001650">
    <property type="entry name" value="Helicase_C-like"/>
</dbReference>
<dbReference type="InterPro" id="IPR027417">
    <property type="entry name" value="P-loop_NTPase"/>
</dbReference>
<dbReference type="PANTHER" id="PTHR18934">
    <property type="entry name" value="ATP-DEPENDENT RNA HELICASE"/>
    <property type="match status" value="1"/>
</dbReference>
<dbReference type="PANTHER" id="PTHR18934:SF99">
    <property type="entry name" value="ATP-DEPENDENT RNA HELICASE DHX37-RELATED"/>
    <property type="match status" value="1"/>
</dbReference>
<dbReference type="Pfam" id="PF00270">
    <property type="entry name" value="DEAD"/>
    <property type="match status" value="1"/>
</dbReference>
<dbReference type="Pfam" id="PF04408">
    <property type="entry name" value="HA2_N"/>
    <property type="match status" value="1"/>
</dbReference>
<dbReference type="Pfam" id="PF00271">
    <property type="entry name" value="Helicase_C"/>
    <property type="match status" value="1"/>
</dbReference>
<dbReference type="Pfam" id="PF07717">
    <property type="entry name" value="OB_NTP_bind"/>
    <property type="match status" value="1"/>
</dbReference>
<dbReference type="SMART" id="SM00487">
    <property type="entry name" value="DEXDc"/>
    <property type="match status" value="1"/>
</dbReference>
<dbReference type="SMART" id="SM00847">
    <property type="entry name" value="HA2"/>
    <property type="match status" value="1"/>
</dbReference>
<dbReference type="SMART" id="SM00490">
    <property type="entry name" value="HELICc"/>
    <property type="match status" value="1"/>
</dbReference>
<dbReference type="SUPFAM" id="SSF52540">
    <property type="entry name" value="P-loop containing nucleoside triphosphate hydrolases"/>
    <property type="match status" value="1"/>
</dbReference>
<dbReference type="PROSITE" id="PS51192">
    <property type="entry name" value="HELICASE_ATP_BIND_1"/>
    <property type="match status" value="1"/>
</dbReference>
<dbReference type="PROSITE" id="PS51194">
    <property type="entry name" value="HELICASE_CTER"/>
    <property type="match status" value="1"/>
</dbReference>